<protein>
    <recommendedName>
        <fullName evidence="1">Evolutionarily conserved signaling intermediate in Toll pathway, mitochondrial</fullName>
    </recommendedName>
    <alternativeName>
        <fullName evidence="8">Protein ECSIT</fullName>
    </alternativeName>
</protein>
<proteinExistence type="evidence at protein level"/>
<organism evidence="9">
    <name type="scientific">Drosophila melanogaster</name>
    <name type="common">Fruit fly</name>
    <dbReference type="NCBI Taxonomy" id="7227"/>
    <lineage>
        <taxon>Eukaryota</taxon>
        <taxon>Metazoa</taxon>
        <taxon>Ecdysozoa</taxon>
        <taxon>Arthropoda</taxon>
        <taxon>Hexapoda</taxon>
        <taxon>Insecta</taxon>
        <taxon>Pterygota</taxon>
        <taxon>Neoptera</taxon>
        <taxon>Endopterygota</taxon>
        <taxon>Diptera</taxon>
        <taxon>Brachycera</taxon>
        <taxon>Muscomorpha</taxon>
        <taxon>Ephydroidea</taxon>
        <taxon>Drosophilidae</taxon>
        <taxon>Drosophila</taxon>
        <taxon>Sophophora</taxon>
    </lineage>
</organism>
<name>ECSIT_DROME</name>
<feature type="transit peptide" description="Mitochondrion" evidence="2">
    <location>
        <begin position="1"/>
        <end position="26"/>
    </location>
</feature>
<feature type="chain" id="PRO_0000291992" description="Evolutionarily conserved signaling intermediate in Toll pathway, mitochondrial">
    <location>
        <begin position="27"/>
        <end position="409"/>
    </location>
</feature>
<feature type="region of interest" description="Disordered" evidence="3">
    <location>
        <begin position="27"/>
        <end position="53"/>
    </location>
</feature>
<feature type="region of interest" description="Disordered" evidence="3">
    <location>
        <begin position="383"/>
        <end position="409"/>
    </location>
</feature>
<feature type="compositionally biased region" description="Basic and acidic residues" evidence="3">
    <location>
        <begin position="400"/>
        <end position="409"/>
    </location>
</feature>
<feature type="sequence conflict" description="In Ref. 4; AAL48530." evidence="6" ref="4">
    <original>K</original>
    <variation>R</variation>
    <location>
        <position position="120"/>
    </location>
</feature>
<comment type="function">
    <text evidence="4 7">As part of the MCIA complex, involved in the assembly of the mitochondrial complex I (Probable). Involved in the innate immune response; promotes the production of antibacterial peptides.</text>
</comment>
<comment type="subunit">
    <text evidence="4 5">Interacts with Traf6 (PubMed:10465784). Associates with mitochondrial complex I assembly intermediates during its biogenesis (PubMed:34386730).</text>
</comment>
<comment type="subcellular location">
    <subcellularLocation>
        <location evidence="1">Cytoplasm</location>
    </subcellularLocation>
    <subcellularLocation>
        <location evidence="1">Nucleus</location>
    </subcellularLocation>
    <subcellularLocation>
        <location evidence="1">Mitochondrion</location>
    </subcellularLocation>
</comment>
<comment type="similarity">
    <text evidence="6">Belongs to the ECSIT family.</text>
</comment>
<comment type="sequence caution" evidence="6">
    <conflict type="frameshift">
        <sequence resource="EMBL-CDS" id="AAF01220"/>
    </conflict>
</comment>
<evidence type="ECO:0000250" key="1">
    <source>
        <dbReference type="UniProtKB" id="Q9BQ95"/>
    </source>
</evidence>
<evidence type="ECO:0000255" key="2"/>
<evidence type="ECO:0000256" key="3">
    <source>
        <dbReference type="SAM" id="MobiDB-lite"/>
    </source>
</evidence>
<evidence type="ECO:0000269" key="4">
    <source>
    </source>
</evidence>
<evidence type="ECO:0000269" key="5">
    <source>
    </source>
</evidence>
<evidence type="ECO:0000305" key="6"/>
<evidence type="ECO:0000305" key="7">
    <source>
    </source>
</evidence>
<evidence type="ECO:0000312" key="8">
    <source>
        <dbReference type="FlyBase" id="FBgn0028436"/>
    </source>
</evidence>
<evidence type="ECO:0000312" key="9">
    <source>
        <dbReference type="Proteomes" id="UP000000803"/>
    </source>
</evidence>
<accession>Q9U6M0</accession>
<accession>Q8SZF7</accession>
<accession>Q9VNJ6</accession>
<keyword id="KW-0963">Cytoplasm</keyword>
<keyword id="KW-0391">Immunity</keyword>
<keyword id="KW-0399">Innate immunity</keyword>
<keyword id="KW-0496">Mitochondrion</keyword>
<keyword id="KW-0539">Nucleus</keyword>
<keyword id="KW-1185">Reference proteome</keyword>
<keyword id="KW-0809">Transit peptide</keyword>
<reference key="1">
    <citation type="journal article" date="1999" name="Genes Dev.">
        <title>ECSIT is an evolutionarily conserved intermediate in the Toll/IL-1 signal transduction pathway.</title>
        <authorList>
            <person name="Kopp E."/>
            <person name="Medzhitov R."/>
            <person name="Carothers J."/>
            <person name="Xiao C."/>
            <person name="Douglas I."/>
            <person name="Janeway C.A."/>
            <person name="Ghosh S."/>
        </authorList>
    </citation>
    <scope>NUCLEOTIDE SEQUENCE [MRNA]</scope>
    <scope>FUNCTION</scope>
    <scope>INTERACTION WITH TRAF6</scope>
</reference>
<reference key="2">
    <citation type="journal article" date="2000" name="Science">
        <title>The genome sequence of Drosophila melanogaster.</title>
        <authorList>
            <person name="Adams M.D."/>
            <person name="Celniker S.E."/>
            <person name="Holt R.A."/>
            <person name="Evans C.A."/>
            <person name="Gocayne J.D."/>
            <person name="Amanatides P.G."/>
            <person name="Scherer S.E."/>
            <person name="Li P.W."/>
            <person name="Hoskins R.A."/>
            <person name="Galle R.F."/>
            <person name="George R.A."/>
            <person name="Lewis S.E."/>
            <person name="Richards S."/>
            <person name="Ashburner M."/>
            <person name="Henderson S.N."/>
            <person name="Sutton G.G."/>
            <person name="Wortman J.R."/>
            <person name="Yandell M.D."/>
            <person name="Zhang Q."/>
            <person name="Chen L.X."/>
            <person name="Brandon R.C."/>
            <person name="Rogers Y.-H.C."/>
            <person name="Blazej R.G."/>
            <person name="Champe M."/>
            <person name="Pfeiffer B.D."/>
            <person name="Wan K.H."/>
            <person name="Doyle C."/>
            <person name="Baxter E.G."/>
            <person name="Helt G."/>
            <person name="Nelson C.R."/>
            <person name="Miklos G.L.G."/>
            <person name="Abril J.F."/>
            <person name="Agbayani A."/>
            <person name="An H.-J."/>
            <person name="Andrews-Pfannkoch C."/>
            <person name="Baldwin D."/>
            <person name="Ballew R.M."/>
            <person name="Basu A."/>
            <person name="Baxendale J."/>
            <person name="Bayraktaroglu L."/>
            <person name="Beasley E.M."/>
            <person name="Beeson K.Y."/>
            <person name="Benos P.V."/>
            <person name="Berman B.P."/>
            <person name="Bhandari D."/>
            <person name="Bolshakov S."/>
            <person name="Borkova D."/>
            <person name="Botchan M.R."/>
            <person name="Bouck J."/>
            <person name="Brokstein P."/>
            <person name="Brottier P."/>
            <person name="Burtis K.C."/>
            <person name="Busam D.A."/>
            <person name="Butler H."/>
            <person name="Cadieu E."/>
            <person name="Center A."/>
            <person name="Chandra I."/>
            <person name="Cherry J.M."/>
            <person name="Cawley S."/>
            <person name="Dahlke C."/>
            <person name="Davenport L.B."/>
            <person name="Davies P."/>
            <person name="de Pablos B."/>
            <person name="Delcher A."/>
            <person name="Deng Z."/>
            <person name="Mays A.D."/>
            <person name="Dew I."/>
            <person name="Dietz S.M."/>
            <person name="Dodson K."/>
            <person name="Doup L.E."/>
            <person name="Downes M."/>
            <person name="Dugan-Rocha S."/>
            <person name="Dunkov B.C."/>
            <person name="Dunn P."/>
            <person name="Durbin K.J."/>
            <person name="Evangelista C.C."/>
            <person name="Ferraz C."/>
            <person name="Ferriera S."/>
            <person name="Fleischmann W."/>
            <person name="Fosler C."/>
            <person name="Gabrielian A.E."/>
            <person name="Garg N.S."/>
            <person name="Gelbart W.M."/>
            <person name="Glasser K."/>
            <person name="Glodek A."/>
            <person name="Gong F."/>
            <person name="Gorrell J.H."/>
            <person name="Gu Z."/>
            <person name="Guan P."/>
            <person name="Harris M."/>
            <person name="Harris N.L."/>
            <person name="Harvey D.A."/>
            <person name="Heiman T.J."/>
            <person name="Hernandez J.R."/>
            <person name="Houck J."/>
            <person name="Hostin D."/>
            <person name="Houston K.A."/>
            <person name="Howland T.J."/>
            <person name="Wei M.-H."/>
            <person name="Ibegwam C."/>
            <person name="Jalali M."/>
            <person name="Kalush F."/>
            <person name="Karpen G.H."/>
            <person name="Ke Z."/>
            <person name="Kennison J.A."/>
            <person name="Ketchum K.A."/>
            <person name="Kimmel B.E."/>
            <person name="Kodira C.D."/>
            <person name="Kraft C.L."/>
            <person name="Kravitz S."/>
            <person name="Kulp D."/>
            <person name="Lai Z."/>
            <person name="Lasko P."/>
            <person name="Lei Y."/>
            <person name="Levitsky A.A."/>
            <person name="Li J.H."/>
            <person name="Li Z."/>
            <person name="Liang Y."/>
            <person name="Lin X."/>
            <person name="Liu X."/>
            <person name="Mattei B."/>
            <person name="McIntosh T.C."/>
            <person name="McLeod M.P."/>
            <person name="McPherson D."/>
            <person name="Merkulov G."/>
            <person name="Milshina N.V."/>
            <person name="Mobarry C."/>
            <person name="Morris J."/>
            <person name="Moshrefi A."/>
            <person name="Mount S.M."/>
            <person name="Moy M."/>
            <person name="Murphy B."/>
            <person name="Murphy L."/>
            <person name="Muzny D.M."/>
            <person name="Nelson D.L."/>
            <person name="Nelson D.R."/>
            <person name="Nelson K.A."/>
            <person name="Nixon K."/>
            <person name="Nusskern D.R."/>
            <person name="Pacleb J.M."/>
            <person name="Palazzolo M."/>
            <person name="Pittman G.S."/>
            <person name="Pan S."/>
            <person name="Pollard J."/>
            <person name="Puri V."/>
            <person name="Reese M.G."/>
            <person name="Reinert K."/>
            <person name="Remington K."/>
            <person name="Saunders R.D.C."/>
            <person name="Scheeler F."/>
            <person name="Shen H."/>
            <person name="Shue B.C."/>
            <person name="Siden-Kiamos I."/>
            <person name="Simpson M."/>
            <person name="Skupski M.P."/>
            <person name="Smith T.J."/>
            <person name="Spier E."/>
            <person name="Spradling A.C."/>
            <person name="Stapleton M."/>
            <person name="Strong R."/>
            <person name="Sun E."/>
            <person name="Svirskas R."/>
            <person name="Tector C."/>
            <person name="Turner R."/>
            <person name="Venter E."/>
            <person name="Wang A.H."/>
            <person name="Wang X."/>
            <person name="Wang Z.-Y."/>
            <person name="Wassarman D.A."/>
            <person name="Weinstock G.M."/>
            <person name="Weissenbach J."/>
            <person name="Williams S.M."/>
            <person name="Woodage T."/>
            <person name="Worley K.C."/>
            <person name="Wu D."/>
            <person name="Yang S."/>
            <person name="Yao Q.A."/>
            <person name="Ye J."/>
            <person name="Yeh R.-F."/>
            <person name="Zaveri J.S."/>
            <person name="Zhan M."/>
            <person name="Zhang G."/>
            <person name="Zhao Q."/>
            <person name="Zheng L."/>
            <person name="Zheng X.H."/>
            <person name="Zhong F.N."/>
            <person name="Zhong W."/>
            <person name="Zhou X."/>
            <person name="Zhu S.C."/>
            <person name="Zhu X."/>
            <person name="Smith H.O."/>
            <person name="Gibbs R.A."/>
            <person name="Myers E.W."/>
            <person name="Rubin G.M."/>
            <person name="Venter J.C."/>
        </authorList>
    </citation>
    <scope>NUCLEOTIDE SEQUENCE [LARGE SCALE GENOMIC DNA]</scope>
    <source>
        <strain>Berkeley</strain>
    </source>
</reference>
<reference key="3">
    <citation type="journal article" date="2002" name="Genome Biol.">
        <title>Annotation of the Drosophila melanogaster euchromatic genome: a systematic review.</title>
        <authorList>
            <person name="Misra S."/>
            <person name="Crosby M.A."/>
            <person name="Mungall C.J."/>
            <person name="Matthews B.B."/>
            <person name="Campbell K.S."/>
            <person name="Hradecky P."/>
            <person name="Huang Y."/>
            <person name="Kaminker J.S."/>
            <person name="Millburn G.H."/>
            <person name="Prochnik S.E."/>
            <person name="Smith C.D."/>
            <person name="Tupy J.L."/>
            <person name="Whitfield E.J."/>
            <person name="Bayraktaroglu L."/>
            <person name="Berman B.P."/>
            <person name="Bettencourt B.R."/>
            <person name="Celniker S.E."/>
            <person name="de Grey A.D.N.J."/>
            <person name="Drysdale R.A."/>
            <person name="Harris N.L."/>
            <person name="Richter J."/>
            <person name="Russo S."/>
            <person name="Schroeder A.J."/>
            <person name="Shu S.Q."/>
            <person name="Stapleton M."/>
            <person name="Yamada C."/>
            <person name="Ashburner M."/>
            <person name="Gelbart W.M."/>
            <person name="Rubin G.M."/>
            <person name="Lewis S.E."/>
        </authorList>
    </citation>
    <scope>GENOME REANNOTATION</scope>
    <source>
        <strain>Berkeley</strain>
    </source>
</reference>
<reference key="4">
    <citation type="journal article" date="2002" name="Genome Biol.">
        <title>A Drosophila full-length cDNA resource.</title>
        <authorList>
            <person name="Stapleton M."/>
            <person name="Carlson J.W."/>
            <person name="Brokstein P."/>
            <person name="Yu C."/>
            <person name="Champe M."/>
            <person name="George R.A."/>
            <person name="Guarin H."/>
            <person name="Kronmiller B."/>
            <person name="Pacleb J.M."/>
            <person name="Park S."/>
            <person name="Wan K.H."/>
            <person name="Rubin G.M."/>
            <person name="Celniker S.E."/>
        </authorList>
    </citation>
    <scope>NUCLEOTIDE SEQUENCE [LARGE SCALE MRNA]</scope>
    <source>
        <strain>Berkeley</strain>
        <tissue>Embryo</tissue>
    </source>
</reference>
<reference key="5">
    <citation type="journal article" date="2021" name="IScience">
        <title>Dissecting the concordant and disparate roles of NDUFAF3 and NDUFAF4 in mitochondrial complex I biogenesis.</title>
        <authorList>
            <person name="Murari A."/>
            <person name="Rhooms S.K."/>
            <person name="Garcia C."/>
            <person name="Liu T."/>
            <person name="Li H."/>
            <person name="Mishra B."/>
            <person name="Deshong C."/>
            <person name="Owusu-Ansah E."/>
        </authorList>
    </citation>
    <scope>FUNCTION</scope>
    <scope>INTERACTION WITH COMPLEX 1</scope>
</reference>
<dbReference type="EMBL" id="AF182511">
    <property type="protein sequence ID" value="AAF01220.1"/>
    <property type="status" value="ALT_FRAME"/>
    <property type="molecule type" value="mRNA"/>
</dbReference>
<dbReference type="EMBL" id="AE014297">
    <property type="protein sequence ID" value="AAF51937.1"/>
    <property type="molecule type" value="Genomic_DNA"/>
</dbReference>
<dbReference type="EMBL" id="AY070908">
    <property type="protein sequence ID" value="AAL48530.1"/>
    <property type="molecule type" value="mRNA"/>
</dbReference>
<dbReference type="RefSeq" id="NP_649602.2">
    <property type="nucleotide sequence ID" value="NM_141345.2"/>
</dbReference>
<dbReference type="BioGRID" id="65936">
    <property type="interactions" value="7"/>
</dbReference>
<dbReference type="DIP" id="DIP-18542N"/>
<dbReference type="FunCoup" id="Q9U6M0">
    <property type="interactions" value="712"/>
</dbReference>
<dbReference type="IntAct" id="Q9U6M0">
    <property type="interactions" value="4"/>
</dbReference>
<dbReference type="STRING" id="7227.FBpp0078296"/>
<dbReference type="PaxDb" id="7227-FBpp0078296"/>
<dbReference type="DNASU" id="40732"/>
<dbReference type="EnsemblMetazoa" id="FBtr0078647">
    <property type="protein sequence ID" value="FBpp0078296"/>
    <property type="gene ID" value="FBgn0028436"/>
</dbReference>
<dbReference type="GeneID" id="40732"/>
<dbReference type="KEGG" id="dme:Dmel_CG10610"/>
<dbReference type="UCSC" id="CG10610-RA">
    <property type="organism name" value="d. melanogaster"/>
</dbReference>
<dbReference type="AGR" id="FB:FBgn0028436"/>
<dbReference type="CTD" id="51295"/>
<dbReference type="FlyBase" id="FBgn0028436">
    <property type="gene designation" value="ECSIT"/>
</dbReference>
<dbReference type="VEuPathDB" id="VectorBase:FBgn0028436"/>
<dbReference type="eggNOG" id="KOG3941">
    <property type="taxonomic scope" value="Eukaryota"/>
</dbReference>
<dbReference type="GeneTree" id="ENSGT00390000005147"/>
<dbReference type="HOGENOM" id="CLU_046917_1_0_1"/>
<dbReference type="InParanoid" id="Q9U6M0"/>
<dbReference type="OMA" id="GPFHIWL"/>
<dbReference type="OrthoDB" id="10064298at2759"/>
<dbReference type="PhylomeDB" id="Q9U6M0"/>
<dbReference type="Reactome" id="R-DME-6799198">
    <property type="pathway name" value="Complex I biogenesis"/>
</dbReference>
<dbReference type="BioGRID-ORCS" id="40732">
    <property type="hits" value="0 hits in 1 CRISPR screen"/>
</dbReference>
<dbReference type="GenomeRNAi" id="40732"/>
<dbReference type="PRO" id="PR:Q9U6M0"/>
<dbReference type="Proteomes" id="UP000000803">
    <property type="component" value="Chromosome 3R"/>
</dbReference>
<dbReference type="Bgee" id="FBgn0028436">
    <property type="expression patterns" value="Expressed in adult hindgut (Drosophila) and 43 other cell types or tissues"/>
</dbReference>
<dbReference type="ExpressionAtlas" id="Q9U6M0">
    <property type="expression patterns" value="baseline and differential"/>
</dbReference>
<dbReference type="GO" id="GO:0005737">
    <property type="term" value="C:cytoplasm"/>
    <property type="evidence" value="ECO:0000250"/>
    <property type="project" value="UniProtKB"/>
</dbReference>
<dbReference type="GO" id="GO:0005739">
    <property type="term" value="C:mitochondrion"/>
    <property type="evidence" value="ECO:0000314"/>
    <property type="project" value="FlyBase"/>
</dbReference>
<dbReference type="GO" id="GO:0005634">
    <property type="term" value="C:nucleus"/>
    <property type="evidence" value="ECO:0000250"/>
    <property type="project" value="UniProtKB"/>
</dbReference>
<dbReference type="GO" id="GO:0007178">
    <property type="term" value="P:cell surface receptor protein serine/threonine kinase signaling pathway"/>
    <property type="evidence" value="ECO:0000318"/>
    <property type="project" value="GO_Central"/>
</dbReference>
<dbReference type="GO" id="GO:0045087">
    <property type="term" value="P:innate immune response"/>
    <property type="evidence" value="ECO:0000314"/>
    <property type="project" value="FlyBase"/>
</dbReference>
<dbReference type="GO" id="GO:0032981">
    <property type="term" value="P:mitochondrial respiratory chain complex I assembly"/>
    <property type="evidence" value="ECO:0000304"/>
    <property type="project" value="FlyBase"/>
</dbReference>
<dbReference type="GO" id="GO:0051341">
    <property type="term" value="P:regulation of oxidoreductase activity"/>
    <property type="evidence" value="ECO:0000250"/>
    <property type="project" value="UniProtKB"/>
</dbReference>
<dbReference type="GO" id="GO:0061635">
    <property type="term" value="P:regulation of protein complex stability"/>
    <property type="evidence" value="ECO:0000250"/>
    <property type="project" value="UniProtKB"/>
</dbReference>
<dbReference type="InterPro" id="IPR029342">
    <property type="entry name" value="ECIST_C"/>
</dbReference>
<dbReference type="InterPro" id="IPR010418">
    <property type="entry name" value="ECSIT"/>
</dbReference>
<dbReference type="InterPro" id="IPR046448">
    <property type="entry name" value="ECSIT_N"/>
</dbReference>
<dbReference type="PANTHER" id="PTHR13113">
    <property type="entry name" value="ECSIT EVOLUTIONARILY CONSERVED SIGNALING INTERMEDIATE IN TOLL PATHWAYS"/>
    <property type="match status" value="1"/>
</dbReference>
<dbReference type="PANTHER" id="PTHR13113:SF1">
    <property type="entry name" value="EVOLUTIONARILY CONSERVED SIGNALING INTERMEDIATE IN TOLL PATHWAY, MITOCHONDRIAL"/>
    <property type="match status" value="1"/>
</dbReference>
<dbReference type="Pfam" id="PF14784">
    <property type="entry name" value="ECSIT_C"/>
    <property type="match status" value="1"/>
</dbReference>
<dbReference type="Pfam" id="PF06239">
    <property type="entry name" value="ECSIT_N"/>
    <property type="match status" value="1"/>
</dbReference>
<dbReference type="SMART" id="SM01284">
    <property type="entry name" value="ECSIT_Cterm"/>
    <property type="match status" value="1"/>
</dbReference>
<sequence length="409" mass="47065">MLRRAQCLLRLHGNGGHSLVSRFRNYATDEGNPKQNPNPNPRAQKPGTKNLPALRNPFAAAQDRTKNSYLTMVEIFQERDVHRRNHVEFIYAALKNMADFGVERDLEVYKALINVMPKGKFIPTNMFQAEFMHYPKQQQCIIDLLEQMEDCGVMPDHEMEAMLLNVFGRQGHPLRKYWRMMYWMPKFKNLSPWPLPDPVPDDTLEMAKLALERMCTVDLRSKITVFETSELKDAIDDTWIVSGMSPEQEKLLREHSRQKALYIEGPFHIWLRNRRINYFTLRADADSEFLSELDERQLDEDDVSHIEVPFFGRAPPRRHNQLGKLRSVHQQDDGTIMAICATGTSTKDSLLSWIRLLEANGNPSIGEVPVLFRFTSEVPAKAEEIEGGASVPATSDNSSQDEHISSRQK</sequence>
<gene>
    <name evidence="8" type="primary">ECSIT</name>
    <name type="ORF">CG10610</name>
</gene>